<organism>
    <name type="scientific">Laccaria bicolor (strain S238N-H82 / ATCC MYA-4686)</name>
    <name type="common">Bicoloured deceiver</name>
    <name type="synonym">Laccaria laccata var. bicolor</name>
    <dbReference type="NCBI Taxonomy" id="486041"/>
    <lineage>
        <taxon>Eukaryota</taxon>
        <taxon>Fungi</taxon>
        <taxon>Dikarya</taxon>
        <taxon>Basidiomycota</taxon>
        <taxon>Agaricomycotina</taxon>
        <taxon>Agaricomycetes</taxon>
        <taxon>Agaricomycetidae</taxon>
        <taxon>Agaricales</taxon>
        <taxon>Agaricineae</taxon>
        <taxon>Hydnangiaceae</taxon>
        <taxon>Laccaria</taxon>
    </lineage>
</organism>
<protein>
    <recommendedName>
        <fullName>WD repeat-containing protein JIP5</fullName>
    </recommendedName>
</protein>
<name>JIP5_LACBS</name>
<evidence type="ECO:0000250" key="1"/>
<evidence type="ECO:0000256" key="2">
    <source>
        <dbReference type="SAM" id="MobiDB-lite"/>
    </source>
</evidence>
<evidence type="ECO:0000305" key="3"/>
<dbReference type="EMBL" id="DS547097">
    <property type="protein sequence ID" value="EDR10266.1"/>
    <property type="molecule type" value="Genomic_DNA"/>
</dbReference>
<dbReference type="RefSeq" id="XP_001878716.1">
    <property type="nucleotide sequence ID" value="XM_001878681.1"/>
</dbReference>
<dbReference type="SMR" id="B0D442"/>
<dbReference type="FunCoup" id="B0D442">
    <property type="interactions" value="456"/>
</dbReference>
<dbReference type="STRING" id="486041.B0D442"/>
<dbReference type="GeneID" id="6074627"/>
<dbReference type="KEGG" id="lbc:LACBIDRAFT_189769"/>
<dbReference type="HOGENOM" id="CLU_035848_2_1_1"/>
<dbReference type="InParanoid" id="B0D442"/>
<dbReference type="OrthoDB" id="2288928at2759"/>
<dbReference type="Proteomes" id="UP000001194">
    <property type="component" value="Unassembled WGS sequence"/>
</dbReference>
<dbReference type="GO" id="GO:0005730">
    <property type="term" value="C:nucleolus"/>
    <property type="evidence" value="ECO:0007669"/>
    <property type="project" value="UniProtKB-SubCell"/>
</dbReference>
<dbReference type="Gene3D" id="2.130.10.10">
    <property type="entry name" value="YVTN repeat-like/Quinoprotein amine dehydrogenase"/>
    <property type="match status" value="1"/>
</dbReference>
<dbReference type="InterPro" id="IPR015943">
    <property type="entry name" value="WD40/YVTN_repeat-like_dom_sf"/>
</dbReference>
<dbReference type="InterPro" id="IPR036322">
    <property type="entry name" value="WD40_repeat_dom_sf"/>
</dbReference>
<dbReference type="InterPro" id="IPR001680">
    <property type="entry name" value="WD40_rpt"/>
</dbReference>
<dbReference type="InterPro" id="IPR050505">
    <property type="entry name" value="WDR55_POC1"/>
</dbReference>
<dbReference type="PANTHER" id="PTHR44019">
    <property type="entry name" value="WD REPEAT-CONTAINING PROTEIN 55"/>
    <property type="match status" value="1"/>
</dbReference>
<dbReference type="PANTHER" id="PTHR44019:SF20">
    <property type="entry name" value="WD REPEAT-CONTAINING PROTEIN 55"/>
    <property type="match status" value="1"/>
</dbReference>
<dbReference type="Pfam" id="PF24796">
    <property type="entry name" value="WDR55"/>
    <property type="match status" value="1"/>
</dbReference>
<dbReference type="SMART" id="SM00320">
    <property type="entry name" value="WD40"/>
    <property type="match status" value="3"/>
</dbReference>
<dbReference type="SUPFAM" id="SSF50978">
    <property type="entry name" value="WD40 repeat-like"/>
    <property type="match status" value="1"/>
</dbReference>
<dbReference type="PROSITE" id="PS50082">
    <property type="entry name" value="WD_REPEATS_2"/>
    <property type="match status" value="1"/>
</dbReference>
<dbReference type="PROSITE" id="PS50294">
    <property type="entry name" value="WD_REPEATS_REGION"/>
    <property type="match status" value="1"/>
</dbReference>
<gene>
    <name type="primary">JIP5</name>
    <name type="ORF">LACBIDRAFT_189769</name>
</gene>
<sequence length="415" mass="45486">MPEIDVGSQIFDVVFHPTFATVYTGLLNGHVKAFAYNEQGKEQAAFSVRPSKRSCRGLSIKHDGTHLYAVGKAKALKYNFISGLIIRCSVIDTATAQISTRPGAHDSTINRVKYLMPWLISTGDDDGVIKLWDPRQQECVREYTQHFDYITDFLWLDDKKQLVATSGDGTLSVMDVRSKKPEPFAQSEDQDDELLSIVAIKGHSKIVVGTQLGILSIFNRSKGWGDCVDRVPGHPLSIDALCNLPPGLPNVDPTSTVLTGSSDGYVRAVQILPTKLLGVVADHGEWPIERIAVGGGWWVGSVGHEDLLRMTDLEGFFLDQSEDKELKGALGVTNENEQSDEDEEMDVLGNDAGHPEVDGSGSSSSGESSEDSEASDGETPQAKQRKRKIEQKPLDVDKPKGRNEIDVENAFFDEL</sequence>
<reference key="1">
    <citation type="journal article" date="2008" name="Nature">
        <title>The genome of Laccaria bicolor provides insights into mycorrhizal symbiosis.</title>
        <authorList>
            <person name="Martin F."/>
            <person name="Aerts A."/>
            <person name="Ahren D."/>
            <person name="Brun A."/>
            <person name="Danchin E.G.J."/>
            <person name="Duchaussoy F."/>
            <person name="Gibon J."/>
            <person name="Kohler A."/>
            <person name="Lindquist E."/>
            <person name="Pereda V."/>
            <person name="Salamov A."/>
            <person name="Shapiro H.J."/>
            <person name="Wuyts J."/>
            <person name="Blaudez D."/>
            <person name="Buee M."/>
            <person name="Brokstein P."/>
            <person name="Canbaeck B."/>
            <person name="Cohen D."/>
            <person name="Courty P.E."/>
            <person name="Coutinho P.M."/>
            <person name="Delaruelle C."/>
            <person name="Detter J.C."/>
            <person name="Deveau A."/>
            <person name="DiFazio S."/>
            <person name="Duplessis S."/>
            <person name="Fraissinet-Tachet L."/>
            <person name="Lucic E."/>
            <person name="Frey-Klett P."/>
            <person name="Fourrey C."/>
            <person name="Feussner I."/>
            <person name="Gay G."/>
            <person name="Grimwood J."/>
            <person name="Hoegger P.J."/>
            <person name="Jain P."/>
            <person name="Kilaru S."/>
            <person name="Labbe J."/>
            <person name="Lin Y.C."/>
            <person name="Legue V."/>
            <person name="Le Tacon F."/>
            <person name="Marmeisse R."/>
            <person name="Melayah D."/>
            <person name="Montanini B."/>
            <person name="Muratet M."/>
            <person name="Nehls U."/>
            <person name="Niculita-Hirzel H."/>
            <person name="Oudot-Le Secq M.P."/>
            <person name="Peter M."/>
            <person name="Quesneville H."/>
            <person name="Rajashekar B."/>
            <person name="Reich M."/>
            <person name="Rouhier N."/>
            <person name="Schmutz J."/>
            <person name="Yin T."/>
            <person name="Chalot M."/>
            <person name="Henrissat B."/>
            <person name="Kuees U."/>
            <person name="Lucas S."/>
            <person name="Van de Peer Y."/>
            <person name="Podila G.K."/>
            <person name="Polle A."/>
            <person name="Pukkila P.J."/>
            <person name="Richardson P.M."/>
            <person name="Rouze P."/>
            <person name="Sanders I.R."/>
            <person name="Stajich J.E."/>
            <person name="Tunlid A."/>
            <person name="Tuskan G."/>
            <person name="Grigoriev I.V."/>
        </authorList>
    </citation>
    <scope>NUCLEOTIDE SEQUENCE [LARGE SCALE GENOMIC DNA]</scope>
    <source>
        <strain>S238N-H82 / ATCC MYA-4686</strain>
    </source>
</reference>
<comment type="subcellular location">
    <subcellularLocation>
        <location evidence="1">Nucleus</location>
        <location evidence="1">Nucleolus</location>
    </subcellularLocation>
</comment>
<comment type="similarity">
    <text evidence="3">Belongs to the WD repeat WDR55 family.</text>
</comment>
<feature type="chain" id="PRO_0000333561" description="WD repeat-containing protein JIP5">
    <location>
        <begin position="1"/>
        <end position="415"/>
    </location>
</feature>
<feature type="repeat" description="WD 1">
    <location>
        <begin position="5"/>
        <end position="44"/>
    </location>
</feature>
<feature type="repeat" description="WD 2">
    <location>
        <begin position="104"/>
        <end position="142"/>
    </location>
</feature>
<feature type="repeat" description="WD 3">
    <location>
        <begin position="145"/>
        <end position="184"/>
    </location>
</feature>
<feature type="repeat" description="WD 4">
    <location>
        <begin position="189"/>
        <end position="228"/>
    </location>
</feature>
<feature type="repeat" description="WD 5">
    <location>
        <begin position="233"/>
        <end position="282"/>
    </location>
</feature>
<feature type="region of interest" description="Disordered" evidence="2">
    <location>
        <begin position="328"/>
        <end position="415"/>
    </location>
</feature>
<feature type="compositionally biased region" description="Acidic residues" evidence="2">
    <location>
        <begin position="337"/>
        <end position="346"/>
    </location>
</feature>
<feature type="compositionally biased region" description="Low complexity" evidence="2">
    <location>
        <begin position="358"/>
        <end position="367"/>
    </location>
</feature>
<feature type="compositionally biased region" description="Basic and acidic residues" evidence="2">
    <location>
        <begin position="390"/>
        <end position="405"/>
    </location>
</feature>
<accession>B0D442</accession>
<keyword id="KW-0539">Nucleus</keyword>
<keyword id="KW-1185">Reference proteome</keyword>
<keyword id="KW-0677">Repeat</keyword>
<keyword id="KW-0853">WD repeat</keyword>
<proteinExistence type="inferred from homology"/>